<accession>A9CB96</accession>
<sequence>MKKIKRSAADPDPVYPFGDEVPIPLPPFLVPGGGLTTDGLSLAVQTVDPLNVTLGGVGLKIGDGLSVVDGKLTSEAKIVADPPLQQSGDTLSLSTDSSMMVLPSGQLTINNLPSISVTSSGVGLVSPNAPLQLMSNGALQLSVGGGLTVGAQGSLQISTGVGVNVNAAGVLESYPLPPLVWDYSSKSLTLDIGPGLTVVNGKLQVIGATFSNQMSRMAPAPRADLQSNSIEPLPSPPSKTSLDIAEELQNDKGVSFAFQAREEELGAFTKRTLFAYSGDGLTGPFKAPASAELSSFLTAHPKGRWLIAFPLGTGIVSVDEGILTLEISRSLPEVGSGSSSTSLKVISIYFMDLFFPVPFIDRASHPAPRRSNNSRQLFHSKQRLFLKVKDFKKRSWYSSLFTLINLNIQECPELS</sequence>
<proteinExistence type="evidence at protein level"/>
<reference key="1">
    <citation type="journal article" date="2002" name="J. Gen. Virol.">
        <title>Genetic analysis of an adenovirus isolated from corn snake (Elaphe guttata) implies common origin with the members of the proposed new genus Atadenovirus.</title>
        <authorList>
            <person name="Farkas S.L."/>
            <person name="Benko M."/>
            <person name="Elo P.T."/>
            <person name="Ursu K."/>
            <person name="Dan A."/>
            <person name="Ahne W."/>
            <person name="Harrach B."/>
        </authorList>
    </citation>
    <scope>NUCLEOTIDE SEQUENCE [GENOMIC DNA]</scope>
</reference>
<reference key="2">
    <citation type="journal article" date="2013" name="Acta Crystallogr. F">
        <title>Crystallization of the C-terminal domain of the fibre protein from snake adenovirus 1, an atadenovirus.</title>
        <authorList>
            <person name="Singh A.K."/>
            <person name="Menendez-Conejero R."/>
            <person name="San Martin C."/>
            <person name="van Raaij M.J."/>
        </authorList>
    </citation>
    <scope>SEQUENCE REVISION</scope>
    <scope>SUBCELLULAR LOCATION</scope>
</reference>
<organismHost>
    <name type="scientific">Pantherophis guttatus</name>
    <name type="common">Corn snake</name>
    <name type="synonym">Elaphe guttata</name>
    <dbReference type="NCBI Taxonomy" id="94885"/>
</organismHost>
<gene>
    <name type="ORF">L5</name>
</gene>
<evidence type="ECO:0000250" key="1"/>
<evidence type="ECO:0000269" key="2">
    <source>
    </source>
</evidence>
<evidence type="ECO:0000305" key="3"/>
<evidence type="ECO:0007829" key="4">
    <source>
        <dbReference type="PDB" id="4UMI"/>
    </source>
</evidence>
<feature type="chain" id="PRO_0000425906" description="Fiber protein">
    <location>
        <begin position="1"/>
        <end position="415"/>
    </location>
</feature>
<feature type="sequence conflict" description="In Ref. 2." evidence="3" ref="2">
    <original>STSLKVISIYFMDLFFPVPFIDRASHPAPRRSNNSRQLFHSKQRLFLKVKDFKKRSWYSSLFTLINLNIQECPELS</original>
    <variation>FYLTEK</variation>
    <location>
        <begin position="340"/>
        <end position="415"/>
    </location>
</feature>
<feature type="strand" evidence="4">
    <location>
        <begin position="238"/>
        <end position="249"/>
    </location>
</feature>
<feature type="strand" evidence="4">
    <location>
        <begin position="255"/>
        <end position="265"/>
    </location>
</feature>
<feature type="strand" evidence="4">
    <location>
        <begin position="268"/>
        <end position="279"/>
    </location>
</feature>
<feature type="strand" evidence="4">
    <location>
        <begin position="281"/>
        <end position="283"/>
    </location>
</feature>
<feature type="strand" evidence="4">
    <location>
        <begin position="285"/>
        <end position="288"/>
    </location>
</feature>
<feature type="helix" evidence="4">
    <location>
        <begin position="291"/>
        <end position="298"/>
    </location>
</feature>
<feature type="strand" evidence="4">
    <location>
        <begin position="303"/>
        <end position="309"/>
    </location>
</feature>
<feature type="strand" evidence="4">
    <location>
        <begin position="312"/>
        <end position="319"/>
    </location>
</feature>
<feature type="strand" evidence="4">
    <location>
        <begin position="322"/>
        <end position="329"/>
    </location>
</feature>
<feature type="strand" evidence="4">
    <location>
        <begin position="335"/>
        <end position="339"/>
    </location>
</feature>
<comment type="function">
    <text evidence="1">Forms spikes that protrude from each vertex of the icosahedral capsid. Interacts with host receptor to provide virion initial attachment to target cell. Fiber proteins are shed during virus entry, when virus is still at the cell surface (By similarity).</text>
</comment>
<comment type="subunit">
    <text evidence="1">Homotrimer. Interacts (via N-terminal tail region) with pentons (By similarity).</text>
</comment>
<comment type="subcellular location">
    <subcellularLocation>
        <location evidence="2">Virion</location>
    </subcellularLocation>
    <subcellularLocation>
        <location evidence="1">Host nucleus</location>
    </subcellularLocation>
    <text evidence="1">Anchored to the pentons, protrudes from the virion surface.</text>
</comment>
<comment type="induction">
    <text>Expressed in the late phase of the viral replicative cycle.</text>
</comment>
<comment type="domain">
    <text evidence="1">The tail region anchors the fiber to penton base capsomers, whereas the shaft, built from several repeated motifs, allows the knob to protrude from the virion.</text>
</comment>
<comment type="miscellaneous">
    <text evidence="1">All late proteins expressed from the major late promoter are produced by alternative splicing and alternative polyadenylation of the same gene giving rise to non-overlapping ORFs. A leader sequence is present in the N-terminus of all these mRNAs and is recognized by the viral shutoff protein to provide expression although conventional translation via ribosome scanning from the cap has been shut off in the host cell (By similarity).</text>
</comment>
<comment type="similarity">
    <text evidence="3">Belongs to the adenoviridae fiber family.</text>
</comment>
<keyword id="KW-0002">3D-structure</keyword>
<keyword id="KW-0167">Capsid protein</keyword>
<keyword id="KW-1048">Host nucleus</keyword>
<keyword id="KW-0945">Host-virus interaction</keyword>
<keyword id="KW-0426">Late protein</keyword>
<keyword id="KW-1185">Reference proteome</keyword>
<keyword id="KW-1161">Viral attachment to host cell</keyword>
<keyword id="KW-0946">Virion</keyword>
<keyword id="KW-1160">Virus entry into host cell</keyword>
<dbReference type="EMBL" id="DQ106414">
    <property type="protein sequence ID" value="ABA47246.1"/>
    <property type="molecule type" value="Genomic_DNA"/>
</dbReference>
<dbReference type="RefSeq" id="YP_001552263.1">
    <property type="nucleotide sequence ID" value="NC_009989.1"/>
</dbReference>
<dbReference type="PDB" id="4D0U">
    <property type="method" value="X-ray"/>
    <property type="resolution" value="1.60 A"/>
    <property type="chains" value="A/B/C/D=234-339"/>
</dbReference>
<dbReference type="PDB" id="4D0V">
    <property type="method" value="X-ray"/>
    <property type="resolution" value="1.70 A"/>
    <property type="chains" value="A/B/C/D=234-339"/>
</dbReference>
<dbReference type="PDB" id="4D1F">
    <property type="method" value="X-ray"/>
    <property type="resolution" value="2.70 A"/>
    <property type="chains" value="A/B/C/D/E/F/G/H/I/J/K/L=234-339"/>
</dbReference>
<dbReference type="PDB" id="4D1G">
    <property type="method" value="X-ray"/>
    <property type="resolution" value="1.90 A"/>
    <property type="chains" value="A/B/C/D/E/F/G/H/I/J/K/L=234-339"/>
</dbReference>
<dbReference type="PDB" id="4UMI">
    <property type="method" value="X-ray"/>
    <property type="resolution" value="1.33 A"/>
    <property type="chains" value="A=171-339"/>
</dbReference>
<dbReference type="PDBsum" id="4D0U"/>
<dbReference type="PDBsum" id="4D0V"/>
<dbReference type="PDBsum" id="4D1F"/>
<dbReference type="PDBsum" id="4D1G"/>
<dbReference type="PDBsum" id="4UMI"/>
<dbReference type="SMR" id="A9CB96"/>
<dbReference type="KEGG" id="vg:10973877"/>
<dbReference type="OrthoDB" id="14820at10239"/>
<dbReference type="EvolutionaryTrace" id="A9CB96"/>
<dbReference type="Proteomes" id="UP000136605">
    <property type="component" value="Genome"/>
</dbReference>
<dbReference type="GO" id="GO:0042025">
    <property type="term" value="C:host cell nucleus"/>
    <property type="evidence" value="ECO:0007669"/>
    <property type="project" value="UniProtKB-SubCell"/>
</dbReference>
<dbReference type="GO" id="GO:0019028">
    <property type="term" value="C:viral capsid"/>
    <property type="evidence" value="ECO:0007669"/>
    <property type="project" value="UniProtKB-KW"/>
</dbReference>
<dbReference type="GO" id="GO:0007155">
    <property type="term" value="P:cell adhesion"/>
    <property type="evidence" value="ECO:0007669"/>
    <property type="project" value="InterPro"/>
</dbReference>
<dbReference type="GO" id="GO:0046718">
    <property type="term" value="P:symbiont entry into host cell"/>
    <property type="evidence" value="ECO:0007669"/>
    <property type="project" value="UniProtKB-KW"/>
</dbReference>
<dbReference type="GO" id="GO:0019062">
    <property type="term" value="P:virion attachment to host cell"/>
    <property type="evidence" value="ECO:0007669"/>
    <property type="project" value="UniProtKB-KW"/>
</dbReference>
<dbReference type="InterPro" id="IPR000931">
    <property type="entry name" value="Adeno_fibre"/>
</dbReference>
<dbReference type="InterPro" id="IPR009013">
    <property type="entry name" value="Attachment_protein_shaft_sf"/>
</dbReference>
<dbReference type="InterPro" id="IPR054026">
    <property type="entry name" value="Fibre_HD"/>
</dbReference>
<dbReference type="Pfam" id="PF22183">
    <property type="entry name" value="Fibre_HD"/>
    <property type="match status" value="1"/>
</dbReference>
<dbReference type="PRINTS" id="PR00307">
    <property type="entry name" value="ADENOVSFIBRE"/>
</dbReference>
<dbReference type="SUPFAM" id="SSF51225">
    <property type="entry name" value="Fibre shaft of virus attachment proteins"/>
    <property type="match status" value="1"/>
</dbReference>
<organism>
    <name type="scientific">Snake adenovirus serotype 1</name>
    <name type="common">SnAdV-1</name>
    <dbReference type="NCBI Taxonomy" id="189830"/>
    <lineage>
        <taxon>Viruses</taxon>
        <taxon>Varidnaviria</taxon>
        <taxon>Bamfordvirae</taxon>
        <taxon>Preplasmiviricota</taxon>
        <taxon>Tectiliviricetes</taxon>
        <taxon>Rowavirales</taxon>
        <taxon>Adenoviridae</taxon>
        <taxon>Atadenovirus</taxon>
        <taxon>Snake atadenovirus A</taxon>
    </lineage>
</organism>
<protein>
    <recommendedName>
        <fullName>Fiber protein</fullName>
        <shortName>SPIKE</shortName>
    </recommendedName>
    <alternativeName>
        <fullName>Protein IV</fullName>
    </alternativeName>
</protein>
<name>SPIKE_ADES1</name>